<feature type="chain" id="PRO_1000081958" description="Methylglyoxal synthase">
    <location>
        <begin position="1"/>
        <end position="152"/>
    </location>
</feature>
<feature type="domain" description="MGS-like" evidence="1">
    <location>
        <begin position="6"/>
        <end position="152"/>
    </location>
</feature>
<feature type="active site" description="Proton donor/acceptor" evidence="1">
    <location>
        <position position="71"/>
    </location>
</feature>
<feature type="binding site" evidence="1">
    <location>
        <position position="19"/>
    </location>
    <ligand>
        <name>substrate</name>
    </ligand>
</feature>
<feature type="binding site" evidence="1">
    <location>
        <position position="23"/>
    </location>
    <ligand>
        <name>substrate</name>
    </ligand>
</feature>
<feature type="binding site" evidence="1">
    <location>
        <begin position="45"/>
        <end position="48"/>
    </location>
    <ligand>
        <name>substrate</name>
    </ligand>
</feature>
<feature type="binding site" evidence="1">
    <location>
        <begin position="65"/>
        <end position="66"/>
    </location>
    <ligand>
        <name>substrate</name>
    </ligand>
</feature>
<feature type="binding site" evidence="1">
    <location>
        <position position="98"/>
    </location>
    <ligand>
        <name>substrate</name>
    </ligand>
</feature>
<keyword id="KW-0456">Lyase</keyword>
<protein>
    <recommendedName>
        <fullName evidence="1">Methylglyoxal synthase</fullName>
        <shortName evidence="1">MGS</shortName>
        <ecNumber evidence="1">4.2.3.3</ecNumber>
    </recommendedName>
</protein>
<evidence type="ECO:0000255" key="1">
    <source>
        <dbReference type="HAMAP-Rule" id="MF_00549"/>
    </source>
</evidence>
<accession>A9N6W4</accession>
<comment type="function">
    <text evidence="1">Catalyzes the formation of methylglyoxal from dihydroxyacetone phosphate.</text>
</comment>
<comment type="catalytic activity">
    <reaction evidence="1">
        <text>dihydroxyacetone phosphate = methylglyoxal + phosphate</text>
        <dbReference type="Rhea" id="RHEA:17937"/>
        <dbReference type="ChEBI" id="CHEBI:17158"/>
        <dbReference type="ChEBI" id="CHEBI:43474"/>
        <dbReference type="ChEBI" id="CHEBI:57642"/>
        <dbReference type="EC" id="4.2.3.3"/>
    </reaction>
</comment>
<comment type="similarity">
    <text evidence="1">Belongs to the methylglyoxal synthase family.</text>
</comment>
<reference key="1">
    <citation type="submission" date="2007-11" db="EMBL/GenBank/DDBJ databases">
        <authorList>
            <consortium name="The Salmonella enterica serovar Paratyphi B Genome Sequencing Project"/>
            <person name="McClelland M."/>
            <person name="Sanderson E.K."/>
            <person name="Porwollik S."/>
            <person name="Spieth J."/>
            <person name="Clifton W.S."/>
            <person name="Fulton R."/>
            <person name="Cordes M."/>
            <person name="Wollam A."/>
            <person name="Shah N."/>
            <person name="Pepin K."/>
            <person name="Bhonagiri V."/>
            <person name="Nash W."/>
            <person name="Johnson M."/>
            <person name="Thiruvilangam P."/>
            <person name="Wilson R."/>
        </authorList>
    </citation>
    <scope>NUCLEOTIDE SEQUENCE [LARGE SCALE GENOMIC DNA]</scope>
    <source>
        <strain>ATCC BAA-1250 / SPB7</strain>
    </source>
</reference>
<gene>
    <name evidence="1" type="primary">mgsA</name>
    <name type="ordered locus">SPAB_02481</name>
</gene>
<name>MGSA_SALPB</name>
<proteinExistence type="inferred from homology"/>
<organism>
    <name type="scientific">Salmonella paratyphi B (strain ATCC BAA-1250 / SPB7)</name>
    <dbReference type="NCBI Taxonomy" id="1016998"/>
    <lineage>
        <taxon>Bacteria</taxon>
        <taxon>Pseudomonadati</taxon>
        <taxon>Pseudomonadota</taxon>
        <taxon>Gammaproteobacteria</taxon>
        <taxon>Enterobacterales</taxon>
        <taxon>Enterobacteriaceae</taxon>
        <taxon>Salmonella</taxon>
    </lineage>
</organism>
<dbReference type="EC" id="4.2.3.3" evidence="1"/>
<dbReference type="EMBL" id="CP000886">
    <property type="protein sequence ID" value="ABX67861.1"/>
    <property type="molecule type" value="Genomic_DNA"/>
</dbReference>
<dbReference type="RefSeq" id="WP_000424187.1">
    <property type="nucleotide sequence ID" value="NC_010102.1"/>
</dbReference>
<dbReference type="SMR" id="A9N6W4"/>
<dbReference type="KEGG" id="spq:SPAB_02481"/>
<dbReference type="PATRIC" id="fig|1016998.12.peg.2348"/>
<dbReference type="HOGENOM" id="CLU_120420_0_1_6"/>
<dbReference type="BioCyc" id="SENT1016998:SPAB_RS10085-MONOMER"/>
<dbReference type="Proteomes" id="UP000008556">
    <property type="component" value="Chromosome"/>
</dbReference>
<dbReference type="GO" id="GO:0005829">
    <property type="term" value="C:cytosol"/>
    <property type="evidence" value="ECO:0007669"/>
    <property type="project" value="TreeGrafter"/>
</dbReference>
<dbReference type="GO" id="GO:0008929">
    <property type="term" value="F:methylglyoxal synthase activity"/>
    <property type="evidence" value="ECO:0007669"/>
    <property type="project" value="UniProtKB-UniRule"/>
</dbReference>
<dbReference type="GO" id="GO:0019242">
    <property type="term" value="P:methylglyoxal biosynthetic process"/>
    <property type="evidence" value="ECO:0007669"/>
    <property type="project" value="UniProtKB-UniRule"/>
</dbReference>
<dbReference type="CDD" id="cd01422">
    <property type="entry name" value="MGS"/>
    <property type="match status" value="1"/>
</dbReference>
<dbReference type="FunFam" id="3.40.50.1380:FF:000002">
    <property type="entry name" value="Methylglyoxal synthase"/>
    <property type="match status" value="1"/>
</dbReference>
<dbReference type="Gene3D" id="3.40.50.1380">
    <property type="entry name" value="Methylglyoxal synthase-like domain"/>
    <property type="match status" value="1"/>
</dbReference>
<dbReference type="HAMAP" id="MF_00549">
    <property type="entry name" value="Methylglyoxal_synth"/>
    <property type="match status" value="1"/>
</dbReference>
<dbReference type="InterPro" id="IPR004363">
    <property type="entry name" value="Methylgl_synth"/>
</dbReference>
<dbReference type="InterPro" id="IPR018148">
    <property type="entry name" value="Methylglyoxal_synth_AS"/>
</dbReference>
<dbReference type="InterPro" id="IPR011607">
    <property type="entry name" value="MGS-like_dom"/>
</dbReference>
<dbReference type="InterPro" id="IPR036914">
    <property type="entry name" value="MGS-like_dom_sf"/>
</dbReference>
<dbReference type="NCBIfam" id="TIGR00160">
    <property type="entry name" value="MGSA"/>
    <property type="match status" value="1"/>
</dbReference>
<dbReference type="NCBIfam" id="NF003559">
    <property type="entry name" value="PRK05234.1"/>
    <property type="match status" value="1"/>
</dbReference>
<dbReference type="PANTHER" id="PTHR30492">
    <property type="entry name" value="METHYLGLYOXAL SYNTHASE"/>
    <property type="match status" value="1"/>
</dbReference>
<dbReference type="PANTHER" id="PTHR30492:SF0">
    <property type="entry name" value="METHYLGLYOXAL SYNTHASE"/>
    <property type="match status" value="1"/>
</dbReference>
<dbReference type="Pfam" id="PF02142">
    <property type="entry name" value="MGS"/>
    <property type="match status" value="1"/>
</dbReference>
<dbReference type="PIRSF" id="PIRSF006614">
    <property type="entry name" value="Methylglyox_syn"/>
    <property type="match status" value="1"/>
</dbReference>
<dbReference type="SMART" id="SM00851">
    <property type="entry name" value="MGS"/>
    <property type="match status" value="1"/>
</dbReference>
<dbReference type="SUPFAM" id="SSF52335">
    <property type="entry name" value="Methylglyoxal synthase-like"/>
    <property type="match status" value="1"/>
</dbReference>
<dbReference type="PROSITE" id="PS01335">
    <property type="entry name" value="METHYLGLYOXAL_SYNTH"/>
    <property type="match status" value="1"/>
</dbReference>
<dbReference type="PROSITE" id="PS51855">
    <property type="entry name" value="MGS"/>
    <property type="match status" value="1"/>
</dbReference>
<sequence length="152" mass="16991">MELTTRTLPTRKHIALVAHDHCKQMLMNWVERHQPLLEKHVLYATGTTGNLIQRATGMDVNAMLSGPMGGDQQVGALISEGKIDVLIFFWDPLNAVPHDPDVKALLRLATVWNIPVATNVSTADFIIQSPHFNDAVDILIPDYARYLAERLK</sequence>